<name>SPAN_STRPU</name>
<feature type="signal peptide" evidence="2">
    <location>
        <begin position="1"/>
        <end position="16"/>
    </location>
</feature>
<feature type="propeptide" id="PRO_0000028899" description="Activation peptide" evidence="2">
    <location>
        <begin position="17"/>
        <end position="93"/>
    </location>
</feature>
<feature type="chain" id="PRO_0000028900" description="Protein SpAN">
    <location>
        <begin position="94"/>
        <end position="616"/>
    </location>
</feature>
<feature type="domain" description="Peptidase M12A" evidence="5">
    <location>
        <begin position="93"/>
        <end position="294"/>
    </location>
</feature>
<feature type="domain" description="EGF-like" evidence="4">
    <location>
        <begin position="289"/>
        <end position="329"/>
    </location>
</feature>
<feature type="domain" description="CUB 1" evidence="3">
    <location>
        <begin position="340"/>
        <end position="450"/>
    </location>
</feature>
<feature type="domain" description="CUB 2" evidence="3">
    <location>
        <begin position="503"/>
        <end position="614"/>
    </location>
</feature>
<feature type="region of interest" description="Disordered" evidence="6">
    <location>
        <begin position="30"/>
        <end position="67"/>
    </location>
</feature>
<feature type="region of interest" description="Disordered" evidence="6">
    <location>
        <begin position="461"/>
        <end position="491"/>
    </location>
</feature>
<feature type="active site" evidence="5">
    <location>
        <position position="191"/>
    </location>
</feature>
<feature type="binding site" evidence="5">
    <location>
        <position position="190"/>
    </location>
    <ligand>
        <name>Zn(2+)</name>
        <dbReference type="ChEBI" id="CHEBI:29105"/>
        <note>catalytic</note>
    </ligand>
</feature>
<feature type="binding site" evidence="5">
    <location>
        <position position="194"/>
    </location>
    <ligand>
        <name>Zn(2+)</name>
        <dbReference type="ChEBI" id="CHEBI:29105"/>
        <note>catalytic</note>
    </ligand>
</feature>
<feature type="binding site" evidence="5">
    <location>
        <position position="200"/>
    </location>
    <ligand>
        <name>Zn(2+)</name>
        <dbReference type="ChEBI" id="CHEBI:29105"/>
        <note>catalytic</note>
    </ligand>
</feature>
<feature type="disulfide bond" evidence="5">
    <location>
        <begin position="134"/>
        <end position="293"/>
    </location>
</feature>
<feature type="disulfide bond" evidence="5">
    <location>
        <begin position="162"/>
        <end position="182"/>
    </location>
</feature>
<feature type="disulfide bond" evidence="1">
    <location>
        <begin position="299"/>
        <end position="317"/>
    </location>
</feature>
<feature type="disulfide bond" evidence="1">
    <location>
        <begin position="319"/>
        <end position="328"/>
    </location>
</feature>
<feature type="disulfide bond" evidence="1">
    <location>
        <begin position="340"/>
        <end position="366"/>
    </location>
</feature>
<feature type="disulfide bond" evidence="1">
    <location>
        <begin position="393"/>
        <end position="413"/>
    </location>
</feature>
<feature type="disulfide bond" evidence="1">
    <location>
        <begin position="503"/>
        <end position="529"/>
    </location>
</feature>
<feature type="disulfide bond" evidence="1">
    <location>
        <begin position="556"/>
        <end position="576"/>
    </location>
</feature>
<comment type="cofactor">
    <cofactor evidence="5">
        <name>Zn(2+)</name>
        <dbReference type="ChEBI" id="CHEBI:29105"/>
    </cofactor>
    <text evidence="5">Binds 1 zinc ion per subunit.</text>
</comment>
<comment type="tissue specificity">
    <text>Asymmetrically along the animal-vegetal axis of the blastula.</text>
</comment>
<comment type="developmental stage">
    <text>Very early blastula (between 16-cell stage and hatching).</text>
</comment>
<evidence type="ECO:0000250" key="1"/>
<evidence type="ECO:0000255" key="2"/>
<evidence type="ECO:0000255" key="3">
    <source>
        <dbReference type="PROSITE-ProRule" id="PRU00059"/>
    </source>
</evidence>
<evidence type="ECO:0000255" key="4">
    <source>
        <dbReference type="PROSITE-ProRule" id="PRU00076"/>
    </source>
</evidence>
<evidence type="ECO:0000255" key="5">
    <source>
        <dbReference type="PROSITE-ProRule" id="PRU01211"/>
    </source>
</evidence>
<evidence type="ECO:0000256" key="6">
    <source>
        <dbReference type="SAM" id="MobiDB-lite"/>
    </source>
</evidence>
<sequence length="616" mass="67902">MKLVLLLAGFAALAKCSLAAPAGVQKDIPMETSAPEKPSEATTLGLLKTPKPEPKDEEPSPGAFQGDMMLTDDQLRKVEEAIDDQKAGRKKRKATIYESQRWSYKIIPYVIESSSSGQSSLIRSAMDHWEQNTCLRFEPLTSSHSSRLGHTSYISFFRGNGCWSHVGRSFTNQQQISIGPQCGYFGTIVHEIGHAIGFHHEQSRPDRDEYINVHFENVQSGREHNFAKYTWGSVTSSNVEYDVGSIMHYGGYGFSSNGRPTITTIDPRLNSRLGQRTALSAADIELANRIYECDDVEDCSNADECLNGGYHDADCDCVCPSSYSGDLCQDGGPTVRPADCSYRFTEMTGEITSPNYPSNYEDNTACVYEIEGPYGSTIELTFLDMEIETETLCRYDAVEVRKDDINSIGEKFCGNTLPPVQISSSNQMMVSFTSDPSITRRGFKATYVIIIQTTTVFSTTTLQTTPPSTTTLQTTNPSTTTLQTTNPSTTTLQTTDTPVIGSCGGTFVGVEGRVASPNYPNDYDNSLQCDYVIEVDDGRRVELIFEDFGLEDETTCRWDSLMINLGNGIKVGMKMCGREYPAASLVSIGNRMELKLKTDGSVNDRGFVASYRAIDL</sequence>
<reference key="1">
    <citation type="journal article" date="1992" name="Development">
        <title>Early mRNAs, spatially restricted along the animal-vegetal axis of sea urchin embryos, include one encoding a protein related to tolloid and BMP-1.</title>
        <authorList>
            <person name="Reynolds S.D."/>
            <person name="Angerer L.M."/>
            <person name="Palis J."/>
            <person name="Nasir A."/>
            <person name="Angerer R.C."/>
        </authorList>
    </citation>
    <scope>NUCLEOTIDE SEQUENCE [MRNA]</scope>
</reference>
<keyword id="KW-0165">Cleavage on pair of basic residues</keyword>
<keyword id="KW-0217">Developmental protein</keyword>
<keyword id="KW-1015">Disulfide bond</keyword>
<keyword id="KW-0245">EGF-like domain</keyword>
<keyword id="KW-0378">Hydrolase</keyword>
<keyword id="KW-0479">Metal-binding</keyword>
<keyword id="KW-0482">Metalloprotease</keyword>
<keyword id="KW-0645">Protease</keyword>
<keyword id="KW-1185">Reference proteome</keyword>
<keyword id="KW-0677">Repeat</keyword>
<keyword id="KW-0732">Signal</keyword>
<keyword id="KW-0862">Zinc</keyword>
<protein>
    <recommendedName>
        <fullName>Protein SpAN</fullName>
        <ecNumber>3.4.24.-</ecNumber>
    </recommendedName>
</protein>
<organism>
    <name type="scientific">Strongylocentrotus purpuratus</name>
    <name type="common">Purple sea urchin</name>
    <dbReference type="NCBI Taxonomy" id="7668"/>
    <lineage>
        <taxon>Eukaryota</taxon>
        <taxon>Metazoa</taxon>
        <taxon>Echinodermata</taxon>
        <taxon>Eleutherozoa</taxon>
        <taxon>Echinozoa</taxon>
        <taxon>Echinoidea</taxon>
        <taxon>Euechinoidea</taxon>
        <taxon>Echinacea</taxon>
        <taxon>Camarodonta</taxon>
        <taxon>Echinidea</taxon>
        <taxon>Strongylocentrotidae</taxon>
        <taxon>Strongylocentrotus</taxon>
    </lineage>
</organism>
<gene>
    <name type="primary">SPAN</name>
</gene>
<dbReference type="EC" id="3.4.24.-"/>
<dbReference type="EMBL" id="M84144">
    <property type="protein sequence ID" value="AAA30072.1"/>
    <property type="molecule type" value="mRNA"/>
</dbReference>
<dbReference type="RefSeq" id="NP_999767.1">
    <property type="nucleotide sequence ID" value="NM_214602.2"/>
</dbReference>
<dbReference type="SMR" id="P98068"/>
<dbReference type="FunCoup" id="P98068">
    <property type="interactions" value="193"/>
</dbReference>
<dbReference type="MEROPS" id="M12.013"/>
<dbReference type="GeneID" id="593517"/>
<dbReference type="KEGG" id="spu:593517"/>
<dbReference type="CTD" id="20691"/>
<dbReference type="eggNOG" id="KOG3714">
    <property type="taxonomic scope" value="Eukaryota"/>
</dbReference>
<dbReference type="HOGENOM" id="CLU_464090_0_0_1"/>
<dbReference type="InParanoid" id="P98068"/>
<dbReference type="OrthoDB" id="291007at2759"/>
<dbReference type="Proteomes" id="UP000007110">
    <property type="component" value="Unassembled WGS sequence"/>
</dbReference>
<dbReference type="GO" id="GO:0004222">
    <property type="term" value="F:metalloendopeptidase activity"/>
    <property type="evidence" value="ECO:0000318"/>
    <property type="project" value="GO_Central"/>
</dbReference>
<dbReference type="GO" id="GO:0008270">
    <property type="term" value="F:zinc ion binding"/>
    <property type="evidence" value="ECO:0007669"/>
    <property type="project" value="InterPro"/>
</dbReference>
<dbReference type="GO" id="GO:0006508">
    <property type="term" value="P:proteolysis"/>
    <property type="evidence" value="ECO:0007669"/>
    <property type="project" value="UniProtKB-KW"/>
</dbReference>
<dbReference type="CDD" id="cd00041">
    <property type="entry name" value="CUB"/>
    <property type="match status" value="2"/>
</dbReference>
<dbReference type="CDD" id="cd00054">
    <property type="entry name" value="EGF_CA"/>
    <property type="match status" value="1"/>
</dbReference>
<dbReference type="CDD" id="cd04280">
    <property type="entry name" value="ZnMc_astacin_like"/>
    <property type="match status" value="1"/>
</dbReference>
<dbReference type="FunFam" id="2.60.120.290:FF:000013">
    <property type="entry name" value="Membrane frizzled-related protein"/>
    <property type="match status" value="2"/>
</dbReference>
<dbReference type="FunFam" id="3.40.390.10:FF:000028">
    <property type="entry name" value="Zinc metalloproteinase"/>
    <property type="match status" value="1"/>
</dbReference>
<dbReference type="Gene3D" id="3.40.390.10">
    <property type="entry name" value="Collagenase (Catalytic Domain)"/>
    <property type="match status" value="1"/>
</dbReference>
<dbReference type="Gene3D" id="2.60.120.290">
    <property type="entry name" value="Spermadhesin, CUB domain"/>
    <property type="match status" value="2"/>
</dbReference>
<dbReference type="InterPro" id="IPR034035">
    <property type="entry name" value="Astacin-like_dom"/>
</dbReference>
<dbReference type="InterPro" id="IPR000859">
    <property type="entry name" value="CUB_dom"/>
</dbReference>
<dbReference type="InterPro" id="IPR000742">
    <property type="entry name" value="EGF-like_dom"/>
</dbReference>
<dbReference type="InterPro" id="IPR024079">
    <property type="entry name" value="MetalloPept_cat_dom_sf"/>
</dbReference>
<dbReference type="InterPro" id="IPR001506">
    <property type="entry name" value="Peptidase_M12A"/>
</dbReference>
<dbReference type="InterPro" id="IPR006026">
    <property type="entry name" value="Peptidase_Metallo"/>
</dbReference>
<dbReference type="InterPro" id="IPR017369">
    <property type="entry name" value="SPAN/blastula_protease_10"/>
</dbReference>
<dbReference type="InterPro" id="IPR035914">
    <property type="entry name" value="Sperma_CUB_dom_sf"/>
</dbReference>
<dbReference type="PANTHER" id="PTHR10127">
    <property type="entry name" value="DISCOIDIN, CUB, EGF, LAMININ , AND ZINC METALLOPROTEASE DOMAIN CONTAINING"/>
    <property type="match status" value="1"/>
</dbReference>
<dbReference type="PANTHER" id="PTHR10127:SF780">
    <property type="entry name" value="METALLOENDOPEPTIDASE"/>
    <property type="match status" value="1"/>
</dbReference>
<dbReference type="Pfam" id="PF01400">
    <property type="entry name" value="Astacin"/>
    <property type="match status" value="1"/>
</dbReference>
<dbReference type="Pfam" id="PF00431">
    <property type="entry name" value="CUB"/>
    <property type="match status" value="2"/>
</dbReference>
<dbReference type="PIRSF" id="PIRSF038056">
    <property type="entry name" value="BP10_SPAN"/>
    <property type="match status" value="1"/>
</dbReference>
<dbReference type="PRINTS" id="PR00480">
    <property type="entry name" value="ASTACIN"/>
</dbReference>
<dbReference type="SMART" id="SM00042">
    <property type="entry name" value="CUB"/>
    <property type="match status" value="2"/>
</dbReference>
<dbReference type="SMART" id="SM00235">
    <property type="entry name" value="ZnMc"/>
    <property type="match status" value="1"/>
</dbReference>
<dbReference type="SUPFAM" id="SSF55486">
    <property type="entry name" value="Metalloproteases ('zincins'), catalytic domain"/>
    <property type="match status" value="1"/>
</dbReference>
<dbReference type="SUPFAM" id="SSF49854">
    <property type="entry name" value="Spermadhesin, CUB domain"/>
    <property type="match status" value="2"/>
</dbReference>
<dbReference type="PROSITE" id="PS51864">
    <property type="entry name" value="ASTACIN"/>
    <property type="match status" value="1"/>
</dbReference>
<dbReference type="PROSITE" id="PS01180">
    <property type="entry name" value="CUB"/>
    <property type="match status" value="2"/>
</dbReference>
<dbReference type="PROSITE" id="PS00022">
    <property type="entry name" value="EGF_1"/>
    <property type="match status" value="1"/>
</dbReference>
<dbReference type="PROSITE" id="PS50026">
    <property type="entry name" value="EGF_3"/>
    <property type="match status" value="1"/>
</dbReference>
<dbReference type="PROSITE" id="PS00142">
    <property type="entry name" value="ZINC_PROTEASE"/>
    <property type="match status" value="1"/>
</dbReference>
<proteinExistence type="evidence at transcript level"/>
<accession>P98068</accession>